<accession>Q6G3V1</accession>
<keyword id="KW-0030">Aminoacyl-tRNA synthetase</keyword>
<keyword id="KW-0067">ATP-binding</keyword>
<keyword id="KW-0963">Cytoplasm</keyword>
<keyword id="KW-0436">Ligase</keyword>
<keyword id="KW-0547">Nucleotide-binding</keyword>
<keyword id="KW-0648">Protein biosynthesis</keyword>
<reference key="1">
    <citation type="journal article" date="2004" name="Proc. Natl. Acad. Sci. U.S.A.">
        <title>The louse-borne human pathogen Bartonella quintana is a genomic derivative of the zoonotic agent Bartonella henselae.</title>
        <authorList>
            <person name="Alsmark U.C.M."/>
            <person name="Frank A.C."/>
            <person name="Karlberg E.O."/>
            <person name="Legault B.-A."/>
            <person name="Ardell D.H."/>
            <person name="Canbaeck B."/>
            <person name="Eriksson A.-S."/>
            <person name="Naeslund A.K."/>
            <person name="Handley S.A."/>
            <person name="Huvet M."/>
            <person name="La Scola B."/>
            <person name="Holmberg M."/>
            <person name="Andersson S.G.E."/>
        </authorList>
    </citation>
    <scope>NUCLEOTIDE SEQUENCE [LARGE SCALE GENOMIC DNA]</scope>
    <source>
        <strain>ATCC 49882 / DSM 28221 / CCUG 30454 / Houston 1</strain>
    </source>
</reference>
<comment type="function">
    <text evidence="1">Catalyzes the attachment of glutamate to tRNA(Glu) in a two-step reaction: glutamate is first activated by ATP to form Glu-AMP and then transferred to the acceptor end of tRNA(Glu).</text>
</comment>
<comment type="catalytic activity">
    <reaction evidence="1">
        <text>tRNA(Glu) + L-glutamate + ATP = L-glutamyl-tRNA(Glu) + AMP + diphosphate</text>
        <dbReference type="Rhea" id="RHEA:23540"/>
        <dbReference type="Rhea" id="RHEA-COMP:9663"/>
        <dbReference type="Rhea" id="RHEA-COMP:9680"/>
        <dbReference type="ChEBI" id="CHEBI:29985"/>
        <dbReference type="ChEBI" id="CHEBI:30616"/>
        <dbReference type="ChEBI" id="CHEBI:33019"/>
        <dbReference type="ChEBI" id="CHEBI:78442"/>
        <dbReference type="ChEBI" id="CHEBI:78520"/>
        <dbReference type="ChEBI" id="CHEBI:456215"/>
        <dbReference type="EC" id="6.1.1.17"/>
    </reaction>
</comment>
<comment type="subunit">
    <text evidence="1">Monomer.</text>
</comment>
<comment type="subcellular location">
    <subcellularLocation>
        <location evidence="1">Cytoplasm</location>
    </subcellularLocation>
</comment>
<comment type="similarity">
    <text evidence="1">Belongs to the class-I aminoacyl-tRNA synthetase family. Glutamate--tRNA ligase type 1 subfamily.</text>
</comment>
<feature type="chain" id="PRO_0000119511" description="Glutamate--tRNA ligase 2">
    <location>
        <begin position="1"/>
        <end position="459"/>
    </location>
</feature>
<feature type="short sequence motif" description="'HIGH' region" evidence="1">
    <location>
        <begin position="8"/>
        <end position="18"/>
    </location>
</feature>
<feature type="short sequence motif" description="'KMSKS' region" evidence="1">
    <location>
        <begin position="249"/>
        <end position="253"/>
    </location>
</feature>
<feature type="binding site" evidence="1">
    <location>
        <position position="252"/>
    </location>
    <ligand>
        <name>ATP</name>
        <dbReference type="ChEBI" id="CHEBI:30616"/>
    </ligand>
</feature>
<dbReference type="EC" id="6.1.1.17" evidence="1"/>
<dbReference type="EMBL" id="BX897699">
    <property type="protein sequence ID" value="CAF27450.1"/>
    <property type="molecule type" value="Genomic_DNA"/>
</dbReference>
<dbReference type="SMR" id="Q6G3V1"/>
<dbReference type="PaxDb" id="283166-BH06460"/>
<dbReference type="EnsemblBacteria" id="CAF27450">
    <property type="protein sequence ID" value="CAF27450"/>
    <property type="gene ID" value="BH06460"/>
</dbReference>
<dbReference type="KEGG" id="bhe:BH06460"/>
<dbReference type="eggNOG" id="COG0008">
    <property type="taxonomic scope" value="Bacteria"/>
</dbReference>
<dbReference type="eggNOG" id="COG1384">
    <property type="taxonomic scope" value="Bacteria"/>
</dbReference>
<dbReference type="OrthoDB" id="9807503at2"/>
<dbReference type="Proteomes" id="UP000000421">
    <property type="component" value="Chromosome"/>
</dbReference>
<dbReference type="GO" id="GO:0005737">
    <property type="term" value="C:cytoplasm"/>
    <property type="evidence" value="ECO:0007669"/>
    <property type="project" value="UniProtKB-SubCell"/>
</dbReference>
<dbReference type="GO" id="GO:0005524">
    <property type="term" value="F:ATP binding"/>
    <property type="evidence" value="ECO:0007669"/>
    <property type="project" value="UniProtKB-UniRule"/>
</dbReference>
<dbReference type="GO" id="GO:0004818">
    <property type="term" value="F:glutamate-tRNA ligase activity"/>
    <property type="evidence" value="ECO:0007669"/>
    <property type="project" value="UniProtKB-UniRule"/>
</dbReference>
<dbReference type="GO" id="GO:0000049">
    <property type="term" value="F:tRNA binding"/>
    <property type="evidence" value="ECO:0007669"/>
    <property type="project" value="InterPro"/>
</dbReference>
<dbReference type="GO" id="GO:0006424">
    <property type="term" value="P:glutamyl-tRNA aminoacylation"/>
    <property type="evidence" value="ECO:0007669"/>
    <property type="project" value="UniProtKB-UniRule"/>
</dbReference>
<dbReference type="Gene3D" id="1.10.10.350">
    <property type="match status" value="1"/>
</dbReference>
<dbReference type="Gene3D" id="3.40.50.620">
    <property type="entry name" value="HUPs"/>
    <property type="match status" value="1"/>
</dbReference>
<dbReference type="HAMAP" id="MF_00022">
    <property type="entry name" value="Glu_tRNA_synth_type1"/>
    <property type="match status" value="1"/>
</dbReference>
<dbReference type="InterPro" id="IPR045462">
    <property type="entry name" value="aa-tRNA-synth_I_cd-bd"/>
</dbReference>
<dbReference type="InterPro" id="IPR020751">
    <property type="entry name" value="aa-tRNA-synth_I_codon-bd_sub2"/>
</dbReference>
<dbReference type="InterPro" id="IPR001412">
    <property type="entry name" value="aa-tRNA-synth_I_CS"/>
</dbReference>
<dbReference type="InterPro" id="IPR008925">
    <property type="entry name" value="aa_tRNA-synth_I_cd-bd_sf"/>
</dbReference>
<dbReference type="InterPro" id="IPR004527">
    <property type="entry name" value="Glu-tRNA-ligase_bac/mito"/>
</dbReference>
<dbReference type="InterPro" id="IPR000924">
    <property type="entry name" value="Glu/Gln-tRNA-synth"/>
</dbReference>
<dbReference type="InterPro" id="IPR020058">
    <property type="entry name" value="Glu/Gln-tRNA-synth_Ib_cat-dom"/>
</dbReference>
<dbReference type="InterPro" id="IPR049940">
    <property type="entry name" value="GluQ/Sye"/>
</dbReference>
<dbReference type="InterPro" id="IPR014729">
    <property type="entry name" value="Rossmann-like_a/b/a_fold"/>
</dbReference>
<dbReference type="NCBIfam" id="TIGR00464">
    <property type="entry name" value="gltX_bact"/>
    <property type="match status" value="1"/>
</dbReference>
<dbReference type="PANTHER" id="PTHR43311">
    <property type="entry name" value="GLUTAMATE--TRNA LIGASE"/>
    <property type="match status" value="1"/>
</dbReference>
<dbReference type="PANTHER" id="PTHR43311:SF2">
    <property type="entry name" value="GLUTAMATE--TRNA LIGASE, MITOCHONDRIAL-RELATED"/>
    <property type="match status" value="1"/>
</dbReference>
<dbReference type="Pfam" id="PF19269">
    <property type="entry name" value="Anticodon_2"/>
    <property type="match status" value="1"/>
</dbReference>
<dbReference type="Pfam" id="PF00749">
    <property type="entry name" value="tRNA-synt_1c"/>
    <property type="match status" value="1"/>
</dbReference>
<dbReference type="PRINTS" id="PR00987">
    <property type="entry name" value="TRNASYNTHGLU"/>
</dbReference>
<dbReference type="SUPFAM" id="SSF48163">
    <property type="entry name" value="An anticodon-binding domain of class I aminoacyl-tRNA synthetases"/>
    <property type="match status" value="1"/>
</dbReference>
<dbReference type="SUPFAM" id="SSF52374">
    <property type="entry name" value="Nucleotidylyl transferase"/>
    <property type="match status" value="1"/>
</dbReference>
<dbReference type="PROSITE" id="PS00178">
    <property type="entry name" value="AA_TRNA_LIGASE_I"/>
    <property type="match status" value="1"/>
</dbReference>
<organism>
    <name type="scientific">Bartonella henselae (strain ATCC 49882 / DSM 28221 / CCUG 30454 / Houston 1)</name>
    <name type="common">Rochalimaea henselae</name>
    <dbReference type="NCBI Taxonomy" id="283166"/>
    <lineage>
        <taxon>Bacteria</taxon>
        <taxon>Pseudomonadati</taxon>
        <taxon>Pseudomonadota</taxon>
        <taxon>Alphaproteobacteria</taxon>
        <taxon>Hyphomicrobiales</taxon>
        <taxon>Bartonellaceae</taxon>
        <taxon>Bartonella</taxon>
    </lineage>
</organism>
<gene>
    <name evidence="1" type="primary">gltX2</name>
    <name type="ordered locus">BH06460</name>
</gene>
<protein>
    <recommendedName>
        <fullName evidence="1">Glutamate--tRNA ligase 2</fullName>
        <ecNumber evidence="1">6.1.1.17</ecNumber>
    </recommendedName>
    <alternativeName>
        <fullName evidence="1">Glutamyl-tRNA synthetase 2</fullName>
        <shortName evidence="1">GluRS 2</shortName>
    </alternativeName>
</protein>
<name>SYE2_BARHE</name>
<proteinExistence type="inferred from homology"/>
<sequence>MIKVRFAPSPTGYIHIGNIRIALFNWLYAQAHNGTFILRYDNTDVERSKQEYIDAIAVDLEWLGIQPDEIYYQSKRFNRYDEVAEILKQRGLLYPCYETAEELDRRRKIQLSRKLPPVYDRAALKLTPEKKREFETQGRKPHWRFLLPNFENDPLQKKRTEVCWNDAVKGKQTIDLASLSDPVLIREDGSYLYTLPSVVDDIDMAITHIIRGDDHITNTGAQIALFEALNAKLPTFGHINLLTTLLGKGLSKRNNDLSIHSLRADGFESIAVQCLAVLIGTSQNVHPYPNQAVLLEHFNLQDTSRSVAKFDIADLLTLNSHFVHELTYEEVKKRLENLSINGEKVECFWNAIRSNINKVNDAVLWWKMLHDEQNFDTVALEDRAFVRQSLNLLPEGTLNEESWKVWTVALKEKTGRRGKALFMPLRQALTGMDHGPEMGKILQLLGREKVIERLIIQGE</sequence>
<evidence type="ECO:0000255" key="1">
    <source>
        <dbReference type="HAMAP-Rule" id="MF_00022"/>
    </source>
</evidence>